<reference key="1">
    <citation type="submission" date="2007-07" db="EMBL/GenBank/DDBJ databases">
        <title>Complete genome sequence of Campylobacter jejuni subsp doylei 269.97 isolated from human blood.</title>
        <authorList>
            <person name="Fouts D.E."/>
            <person name="Mongodin E.F."/>
            <person name="Puiu D."/>
            <person name="Sebastian Y."/>
            <person name="Miller W.G."/>
            <person name="Mandrell R.E."/>
            <person name="Lastovica A.J."/>
            <person name="Nelson K.E."/>
        </authorList>
    </citation>
    <scope>NUCLEOTIDE SEQUENCE [LARGE SCALE GENOMIC DNA]</scope>
    <source>
        <strain>ATCC BAA-1458 / RM4099 / 269.97</strain>
    </source>
</reference>
<dbReference type="EC" id="3.1.26.5" evidence="1"/>
<dbReference type="EMBL" id="CP000768">
    <property type="protein sequence ID" value="ABS43606.1"/>
    <property type="molecule type" value="Genomic_DNA"/>
</dbReference>
<dbReference type="SMR" id="A7H368"/>
<dbReference type="KEGG" id="cjd:JJD26997_0821"/>
<dbReference type="HOGENOM" id="CLU_117179_9_5_7"/>
<dbReference type="Proteomes" id="UP000002302">
    <property type="component" value="Chromosome"/>
</dbReference>
<dbReference type="GO" id="GO:0030677">
    <property type="term" value="C:ribonuclease P complex"/>
    <property type="evidence" value="ECO:0007669"/>
    <property type="project" value="TreeGrafter"/>
</dbReference>
<dbReference type="GO" id="GO:0042781">
    <property type="term" value="F:3'-tRNA processing endoribonuclease activity"/>
    <property type="evidence" value="ECO:0007669"/>
    <property type="project" value="TreeGrafter"/>
</dbReference>
<dbReference type="GO" id="GO:0004526">
    <property type="term" value="F:ribonuclease P activity"/>
    <property type="evidence" value="ECO:0007669"/>
    <property type="project" value="UniProtKB-UniRule"/>
</dbReference>
<dbReference type="GO" id="GO:0000049">
    <property type="term" value="F:tRNA binding"/>
    <property type="evidence" value="ECO:0007669"/>
    <property type="project" value="UniProtKB-UniRule"/>
</dbReference>
<dbReference type="GO" id="GO:0001682">
    <property type="term" value="P:tRNA 5'-leader removal"/>
    <property type="evidence" value="ECO:0007669"/>
    <property type="project" value="UniProtKB-UniRule"/>
</dbReference>
<dbReference type="Gene3D" id="3.30.230.10">
    <property type="match status" value="1"/>
</dbReference>
<dbReference type="HAMAP" id="MF_00227">
    <property type="entry name" value="RNase_P"/>
    <property type="match status" value="1"/>
</dbReference>
<dbReference type="InterPro" id="IPR020568">
    <property type="entry name" value="Ribosomal_Su5_D2-typ_SF"/>
</dbReference>
<dbReference type="InterPro" id="IPR014721">
    <property type="entry name" value="Ribsml_uS5_D2-typ_fold_subgr"/>
</dbReference>
<dbReference type="InterPro" id="IPR000100">
    <property type="entry name" value="RNase_P"/>
</dbReference>
<dbReference type="InterPro" id="IPR020539">
    <property type="entry name" value="RNase_P_CS"/>
</dbReference>
<dbReference type="NCBIfam" id="TIGR00188">
    <property type="entry name" value="rnpA"/>
    <property type="match status" value="1"/>
</dbReference>
<dbReference type="PANTHER" id="PTHR33992">
    <property type="entry name" value="RIBONUCLEASE P PROTEIN COMPONENT"/>
    <property type="match status" value="1"/>
</dbReference>
<dbReference type="PANTHER" id="PTHR33992:SF1">
    <property type="entry name" value="RIBONUCLEASE P PROTEIN COMPONENT"/>
    <property type="match status" value="1"/>
</dbReference>
<dbReference type="Pfam" id="PF00825">
    <property type="entry name" value="Ribonuclease_P"/>
    <property type="match status" value="1"/>
</dbReference>
<dbReference type="SUPFAM" id="SSF54211">
    <property type="entry name" value="Ribosomal protein S5 domain 2-like"/>
    <property type="match status" value="1"/>
</dbReference>
<dbReference type="PROSITE" id="PS00648">
    <property type="entry name" value="RIBONUCLEASE_P"/>
    <property type="match status" value="1"/>
</dbReference>
<comment type="function">
    <text evidence="1">RNaseP catalyzes the removal of the 5'-leader sequence from pre-tRNA to produce the mature 5'-terminus. It can also cleave other RNA substrates such as 4.5S RNA. The protein component plays an auxiliary but essential role in vivo by binding to the 5'-leader sequence and broadening the substrate specificity of the ribozyme.</text>
</comment>
<comment type="catalytic activity">
    <reaction evidence="1">
        <text>Endonucleolytic cleavage of RNA, removing 5'-extranucleotides from tRNA precursor.</text>
        <dbReference type="EC" id="3.1.26.5"/>
    </reaction>
</comment>
<comment type="subunit">
    <text evidence="1">Consists of a catalytic RNA component (M1 or rnpB) and a protein subunit.</text>
</comment>
<comment type="similarity">
    <text evidence="1">Belongs to the RnpA family.</text>
</comment>
<proteinExistence type="inferred from homology"/>
<gene>
    <name evidence="1" type="primary">rnpA</name>
    <name type="ordered locus">JJD26997_0821</name>
</gene>
<name>RNPA_CAMJD</name>
<accession>A7H368</accession>
<sequence>MKNFDKFSTNEEFSSVYKVGKKWHCEGVIIFYLNSYEKKIAVVASKKVGKAVVRNRSKRILRALFAKFERYLQDGKYIFVAKNEITELSFSRLEKNLKWGLKKLECFK</sequence>
<feature type="chain" id="PRO_1000021387" description="Ribonuclease P protein component">
    <location>
        <begin position="1"/>
        <end position="108"/>
    </location>
</feature>
<organism>
    <name type="scientific">Campylobacter jejuni subsp. doylei (strain ATCC BAA-1458 / RM4099 / 269.97)</name>
    <dbReference type="NCBI Taxonomy" id="360109"/>
    <lineage>
        <taxon>Bacteria</taxon>
        <taxon>Pseudomonadati</taxon>
        <taxon>Campylobacterota</taxon>
        <taxon>Epsilonproteobacteria</taxon>
        <taxon>Campylobacterales</taxon>
        <taxon>Campylobacteraceae</taxon>
        <taxon>Campylobacter</taxon>
    </lineage>
</organism>
<keyword id="KW-0255">Endonuclease</keyword>
<keyword id="KW-0378">Hydrolase</keyword>
<keyword id="KW-0540">Nuclease</keyword>
<keyword id="KW-0694">RNA-binding</keyword>
<keyword id="KW-0819">tRNA processing</keyword>
<protein>
    <recommendedName>
        <fullName evidence="1">Ribonuclease P protein component</fullName>
        <shortName evidence="1">RNase P protein</shortName>
        <shortName evidence="1">RNaseP protein</shortName>
        <ecNumber evidence="1">3.1.26.5</ecNumber>
    </recommendedName>
    <alternativeName>
        <fullName evidence="1">Protein C5</fullName>
    </alternativeName>
</protein>
<evidence type="ECO:0000255" key="1">
    <source>
        <dbReference type="HAMAP-Rule" id="MF_00227"/>
    </source>
</evidence>